<protein>
    <recommendedName>
        <fullName evidence="1">Aspartyl/glutamyl-tRNA(Asn/Gln) amidotransferase subunit B</fullName>
        <shortName evidence="1">Asp/Glu-ADT subunit B</shortName>
        <ecNumber evidence="1">6.3.5.-</ecNumber>
    </recommendedName>
</protein>
<evidence type="ECO:0000255" key="1">
    <source>
        <dbReference type="HAMAP-Rule" id="MF_00121"/>
    </source>
</evidence>
<sequence>MEYEAVIGLEVHVQLNTKTKAFCSCPNTFGAPANTLTCPRCQAHPGTLPIVNKEMVHKTIKAGLATNCTIQKKSRFARKHYFYPDLPSYYQITQMDEPICTEGHLDITVLNDDGSSYNKSIRINRIHMEEDAGKLVHDDTGRPLSYVDLNRAGCCLIECVSEPDISTGEEAYQYLTELKKIFKYIDVSDCNMEEGSLRCDANVSIRPKGSTELGTKTEVKNMNSFRNVRLAIDYEIKRQIKALNNGEKILQETRLYDAKENTTKGMRSKEGAADYRYFPDPDIPLLVLKDEEIEQAKKELPELPQQKRERLKKDYDLPDQDIVVLTEDAALADYYESAVKAYPKQPKKISNWIMVEVNAYLNKKLQTIKDFKPKAEHIAEIFKLIDEGVISGKIAKEIFEDMCETGEAPSAIVEKKGIKQVSDTGELETIIRKVLEENPKSVADFKAGKEKSFGFLVGQTMKATKGQGNPKLVNEVLRKILSE</sequence>
<accession>C0R214</accession>
<organism>
    <name type="scientific">Brachyspira hyodysenteriae (strain ATCC 49526 / WA1)</name>
    <dbReference type="NCBI Taxonomy" id="565034"/>
    <lineage>
        <taxon>Bacteria</taxon>
        <taxon>Pseudomonadati</taxon>
        <taxon>Spirochaetota</taxon>
        <taxon>Spirochaetia</taxon>
        <taxon>Brachyspirales</taxon>
        <taxon>Brachyspiraceae</taxon>
        <taxon>Brachyspira</taxon>
    </lineage>
</organism>
<feature type="chain" id="PRO_1000122512" description="Aspartyl/glutamyl-tRNA(Asn/Gln) amidotransferase subunit B">
    <location>
        <begin position="1"/>
        <end position="483"/>
    </location>
</feature>
<dbReference type="EC" id="6.3.5.-" evidence="1"/>
<dbReference type="EMBL" id="CP001357">
    <property type="protein sequence ID" value="ACN84152.1"/>
    <property type="molecule type" value="Genomic_DNA"/>
</dbReference>
<dbReference type="RefSeq" id="WP_012671193.1">
    <property type="nucleotide sequence ID" value="NC_012225.1"/>
</dbReference>
<dbReference type="SMR" id="C0R214"/>
<dbReference type="STRING" id="565034.BHWA1_01682"/>
<dbReference type="KEGG" id="bhy:BHWA1_01682"/>
<dbReference type="eggNOG" id="COG0064">
    <property type="taxonomic scope" value="Bacteria"/>
</dbReference>
<dbReference type="HOGENOM" id="CLU_019240_0_0_12"/>
<dbReference type="Proteomes" id="UP000001803">
    <property type="component" value="Chromosome"/>
</dbReference>
<dbReference type="GO" id="GO:0050566">
    <property type="term" value="F:asparaginyl-tRNA synthase (glutamine-hydrolyzing) activity"/>
    <property type="evidence" value="ECO:0007669"/>
    <property type="project" value="RHEA"/>
</dbReference>
<dbReference type="GO" id="GO:0005524">
    <property type="term" value="F:ATP binding"/>
    <property type="evidence" value="ECO:0007669"/>
    <property type="project" value="UniProtKB-KW"/>
</dbReference>
<dbReference type="GO" id="GO:0050567">
    <property type="term" value="F:glutaminyl-tRNA synthase (glutamine-hydrolyzing) activity"/>
    <property type="evidence" value="ECO:0007669"/>
    <property type="project" value="UniProtKB-UniRule"/>
</dbReference>
<dbReference type="GO" id="GO:0070681">
    <property type="term" value="P:glutaminyl-tRNAGln biosynthesis via transamidation"/>
    <property type="evidence" value="ECO:0007669"/>
    <property type="project" value="TreeGrafter"/>
</dbReference>
<dbReference type="GO" id="GO:0006412">
    <property type="term" value="P:translation"/>
    <property type="evidence" value="ECO:0007669"/>
    <property type="project" value="UniProtKB-UniRule"/>
</dbReference>
<dbReference type="FunFam" id="1.10.10.410:FF:000001">
    <property type="entry name" value="Aspartyl/glutamyl-tRNA(Asn/Gln) amidotransferase subunit B"/>
    <property type="match status" value="1"/>
</dbReference>
<dbReference type="Gene3D" id="1.10.10.410">
    <property type="match status" value="1"/>
</dbReference>
<dbReference type="Gene3D" id="1.10.150.380">
    <property type="entry name" value="GatB domain, N-terminal subdomain"/>
    <property type="match status" value="1"/>
</dbReference>
<dbReference type="HAMAP" id="MF_00121">
    <property type="entry name" value="GatB"/>
    <property type="match status" value="1"/>
</dbReference>
<dbReference type="InterPro" id="IPR017959">
    <property type="entry name" value="Asn/Gln-tRNA_amidoTrfase_suB/E"/>
</dbReference>
<dbReference type="InterPro" id="IPR006075">
    <property type="entry name" value="Asn/Gln-tRNA_Trfase_suB/E_cat"/>
</dbReference>
<dbReference type="InterPro" id="IPR018027">
    <property type="entry name" value="Asn/Gln_amidotransferase"/>
</dbReference>
<dbReference type="InterPro" id="IPR003789">
    <property type="entry name" value="Asn/Gln_tRNA_amidoTrase-B-like"/>
</dbReference>
<dbReference type="InterPro" id="IPR004413">
    <property type="entry name" value="GatB"/>
</dbReference>
<dbReference type="InterPro" id="IPR042114">
    <property type="entry name" value="GatB_C_1"/>
</dbReference>
<dbReference type="InterPro" id="IPR023168">
    <property type="entry name" value="GatB_Yqey_C_2"/>
</dbReference>
<dbReference type="InterPro" id="IPR014746">
    <property type="entry name" value="Gln_synth/guanido_kin_cat_dom"/>
</dbReference>
<dbReference type="NCBIfam" id="TIGR00133">
    <property type="entry name" value="gatB"/>
    <property type="match status" value="1"/>
</dbReference>
<dbReference type="NCBIfam" id="NF004012">
    <property type="entry name" value="PRK05477.1-2"/>
    <property type="match status" value="1"/>
</dbReference>
<dbReference type="NCBIfam" id="NF004014">
    <property type="entry name" value="PRK05477.1-4"/>
    <property type="match status" value="1"/>
</dbReference>
<dbReference type="PANTHER" id="PTHR11659">
    <property type="entry name" value="GLUTAMYL-TRNA GLN AMIDOTRANSFERASE SUBUNIT B MITOCHONDRIAL AND PROKARYOTIC PET112-RELATED"/>
    <property type="match status" value="1"/>
</dbReference>
<dbReference type="PANTHER" id="PTHR11659:SF0">
    <property type="entry name" value="GLUTAMYL-TRNA(GLN) AMIDOTRANSFERASE SUBUNIT B, MITOCHONDRIAL"/>
    <property type="match status" value="1"/>
</dbReference>
<dbReference type="Pfam" id="PF02934">
    <property type="entry name" value="GatB_N"/>
    <property type="match status" value="1"/>
</dbReference>
<dbReference type="Pfam" id="PF02637">
    <property type="entry name" value="GatB_Yqey"/>
    <property type="match status" value="1"/>
</dbReference>
<dbReference type="SMART" id="SM00845">
    <property type="entry name" value="GatB_Yqey"/>
    <property type="match status" value="1"/>
</dbReference>
<dbReference type="SUPFAM" id="SSF89095">
    <property type="entry name" value="GatB/YqeY motif"/>
    <property type="match status" value="1"/>
</dbReference>
<dbReference type="SUPFAM" id="SSF55931">
    <property type="entry name" value="Glutamine synthetase/guanido kinase"/>
    <property type="match status" value="1"/>
</dbReference>
<proteinExistence type="inferred from homology"/>
<gene>
    <name evidence="1" type="primary">gatB</name>
    <name type="ordered locus">BHWA1_01682</name>
</gene>
<name>GATB_BRAHW</name>
<comment type="function">
    <text evidence="1">Allows the formation of correctly charged Asn-tRNA(Asn) or Gln-tRNA(Gln) through the transamidation of misacylated Asp-tRNA(Asn) or Glu-tRNA(Gln) in organisms which lack either or both of asparaginyl-tRNA or glutaminyl-tRNA synthetases. The reaction takes place in the presence of glutamine and ATP through an activated phospho-Asp-tRNA(Asn) or phospho-Glu-tRNA(Gln).</text>
</comment>
<comment type="catalytic activity">
    <reaction evidence="1">
        <text>L-glutamyl-tRNA(Gln) + L-glutamine + ATP + H2O = L-glutaminyl-tRNA(Gln) + L-glutamate + ADP + phosphate + H(+)</text>
        <dbReference type="Rhea" id="RHEA:17521"/>
        <dbReference type="Rhea" id="RHEA-COMP:9681"/>
        <dbReference type="Rhea" id="RHEA-COMP:9684"/>
        <dbReference type="ChEBI" id="CHEBI:15377"/>
        <dbReference type="ChEBI" id="CHEBI:15378"/>
        <dbReference type="ChEBI" id="CHEBI:29985"/>
        <dbReference type="ChEBI" id="CHEBI:30616"/>
        <dbReference type="ChEBI" id="CHEBI:43474"/>
        <dbReference type="ChEBI" id="CHEBI:58359"/>
        <dbReference type="ChEBI" id="CHEBI:78520"/>
        <dbReference type="ChEBI" id="CHEBI:78521"/>
        <dbReference type="ChEBI" id="CHEBI:456216"/>
    </reaction>
</comment>
<comment type="catalytic activity">
    <reaction evidence="1">
        <text>L-aspartyl-tRNA(Asn) + L-glutamine + ATP + H2O = L-asparaginyl-tRNA(Asn) + L-glutamate + ADP + phosphate + 2 H(+)</text>
        <dbReference type="Rhea" id="RHEA:14513"/>
        <dbReference type="Rhea" id="RHEA-COMP:9674"/>
        <dbReference type="Rhea" id="RHEA-COMP:9677"/>
        <dbReference type="ChEBI" id="CHEBI:15377"/>
        <dbReference type="ChEBI" id="CHEBI:15378"/>
        <dbReference type="ChEBI" id="CHEBI:29985"/>
        <dbReference type="ChEBI" id="CHEBI:30616"/>
        <dbReference type="ChEBI" id="CHEBI:43474"/>
        <dbReference type="ChEBI" id="CHEBI:58359"/>
        <dbReference type="ChEBI" id="CHEBI:78515"/>
        <dbReference type="ChEBI" id="CHEBI:78516"/>
        <dbReference type="ChEBI" id="CHEBI:456216"/>
    </reaction>
</comment>
<comment type="subunit">
    <text evidence="1">Heterotrimer of A, B and C subunits.</text>
</comment>
<comment type="similarity">
    <text evidence="1">Belongs to the GatB/GatE family. GatB subfamily.</text>
</comment>
<keyword id="KW-0067">ATP-binding</keyword>
<keyword id="KW-0436">Ligase</keyword>
<keyword id="KW-0547">Nucleotide-binding</keyword>
<keyword id="KW-0648">Protein biosynthesis</keyword>
<reference key="1">
    <citation type="journal article" date="2009" name="PLoS ONE">
        <title>Genome sequence of the pathogenic intestinal spirochete Brachyspira hyodysenteriae reveals adaptations to its lifestyle in the porcine large intestine.</title>
        <authorList>
            <person name="Bellgard M.I."/>
            <person name="Wanchanthuek P."/>
            <person name="La T."/>
            <person name="Ryan K."/>
            <person name="Moolhuijzen P."/>
            <person name="Albertyn Z."/>
            <person name="Shaban B."/>
            <person name="Motro Y."/>
            <person name="Dunn D.S."/>
            <person name="Schibeci D."/>
            <person name="Hunter A."/>
            <person name="Barrero R."/>
            <person name="Phillips N.D."/>
            <person name="Hampson D.J."/>
        </authorList>
    </citation>
    <scope>NUCLEOTIDE SEQUENCE [LARGE SCALE GENOMIC DNA]</scope>
    <source>
        <strain>ATCC 49526 / WA1</strain>
    </source>
</reference>